<sequence length="679" mass="76347">MASEQTIDGAAAIPSGGGDEPFLGLLDVALLAVLIGGAAFYFLRSRKKEEEPTRSYSIQPTTVCTTSASDNSFIKKLKASGRSLVVFYGSQTGTGEEFAGRLAKEGIRYRLKGMVADPEECDMEELLQLKDIDNSLAVFCLATYGEGDPTDNAMEFYEWITSGDVDLSGLNYAVFGLGNKTYEHYNKVAIYVDKRLEELGANRVFELGLGDDDANIEDDFITWKDRFWPAVCDHFGIEGGGEEVLIRQYRLLEQPDVQPDRIYTGEIARLHSIQNQRPPFDAKNPFLAPIKVNRELHKGGGRSCMHIELSIEGSKMRYDAGDHVAMFPVNDKSLVEKLGQLCNADLDTVFSLINTDTDSSKKHPFPCPTTYRTALTHYLEITAIPRTHILKELAEYCTDEKEKELLRSMASISPEGKEKYQSWIQDACRNIVHILEDIKSCRPPIDHVCELLPRLQPRYYSISSSAKLHPTDVHVTAVLVEYKTPTGRINKGVATTYLKNKQPQGSEEVKVPVFIRKSQFRLPTKPETPIIMVGPGTGLAPFRGFIQERQFLRDEGKTVGESILYFGCRKRSEDYIYESELEEWVKKGTLNLKAAFSRDQGKKVYVQHLLEQDADLIWNVIGENKGHFYICGDAKNMAVDVRNILVKILSTKGNMSEADAVQYIKKMEAQKRYSADVWS</sequence>
<proteinExistence type="evidence at protein level"/>
<dbReference type="EC" id="1.6.2.4" evidence="1"/>
<dbReference type="EMBL" id="X93090">
    <property type="protein sequence ID" value="CAA63639.1"/>
    <property type="molecule type" value="mRNA"/>
</dbReference>
<dbReference type="EMBL" id="AE014134">
    <property type="protein sequence ID" value="AAF52367.1"/>
    <property type="molecule type" value="Genomic_DNA"/>
</dbReference>
<dbReference type="EMBL" id="AY052000">
    <property type="protein sequence ID" value="AAK93424.1"/>
    <property type="molecule type" value="mRNA"/>
</dbReference>
<dbReference type="RefSeq" id="NP_001260128.1">
    <property type="nucleotide sequence ID" value="NM_001273199.1"/>
</dbReference>
<dbReference type="RefSeq" id="NP_001260129.1">
    <property type="nucleotide sequence ID" value="NM_001273200.1"/>
</dbReference>
<dbReference type="RefSeq" id="NP_477158.1">
    <property type="nucleotide sequence ID" value="NM_057810.4"/>
</dbReference>
<dbReference type="SMR" id="Q27597"/>
<dbReference type="BioGRID" id="60040">
    <property type="interactions" value="3"/>
</dbReference>
<dbReference type="DIP" id="DIP-19958N"/>
<dbReference type="FunCoup" id="Q27597">
    <property type="interactions" value="1897"/>
</dbReference>
<dbReference type="IntAct" id="Q27597">
    <property type="interactions" value="69"/>
</dbReference>
<dbReference type="STRING" id="7227.FBpp0078880"/>
<dbReference type="PaxDb" id="7227-FBpp0078880"/>
<dbReference type="DNASU" id="33883"/>
<dbReference type="EnsemblMetazoa" id="FBtr0079250">
    <property type="protein sequence ID" value="FBpp0078880"/>
    <property type="gene ID" value="FBgn0015623"/>
</dbReference>
<dbReference type="EnsemblMetazoa" id="FBtr0331223">
    <property type="protein sequence ID" value="FBpp0303665"/>
    <property type="gene ID" value="FBgn0015623"/>
</dbReference>
<dbReference type="EnsemblMetazoa" id="FBtr0331224">
    <property type="protein sequence ID" value="FBpp0303666"/>
    <property type="gene ID" value="FBgn0015623"/>
</dbReference>
<dbReference type="GeneID" id="33883"/>
<dbReference type="KEGG" id="dme:Dmel_CG11567"/>
<dbReference type="AGR" id="FB:FBgn0015623"/>
<dbReference type="CTD" id="33883"/>
<dbReference type="FlyBase" id="FBgn0015623">
    <property type="gene designation" value="Cpr"/>
</dbReference>
<dbReference type="VEuPathDB" id="VectorBase:FBgn0015623"/>
<dbReference type="eggNOG" id="KOG1158">
    <property type="taxonomic scope" value="Eukaryota"/>
</dbReference>
<dbReference type="GeneTree" id="ENSGT00940000156847"/>
<dbReference type="HOGENOM" id="CLU_001570_17_3_1"/>
<dbReference type="InParanoid" id="Q27597"/>
<dbReference type="OMA" id="QKRYQRD"/>
<dbReference type="OrthoDB" id="1856718at2759"/>
<dbReference type="PhylomeDB" id="Q27597"/>
<dbReference type="BioGRID-ORCS" id="33883">
    <property type="hits" value="0 hits in 3 CRISPR screens"/>
</dbReference>
<dbReference type="GenomeRNAi" id="33883"/>
<dbReference type="PRO" id="PR:Q27597"/>
<dbReference type="Proteomes" id="UP000000803">
    <property type="component" value="Chromosome 2L"/>
</dbReference>
<dbReference type="Bgee" id="FBgn0015623">
    <property type="expression patterns" value="Expressed in adult oenocyte (Drosophila) in dorsal vessel heart and 231 other cell types or tissues"/>
</dbReference>
<dbReference type="ExpressionAtlas" id="Q27597">
    <property type="expression patterns" value="baseline and differential"/>
</dbReference>
<dbReference type="GO" id="GO:0005829">
    <property type="term" value="C:cytosol"/>
    <property type="evidence" value="ECO:0000318"/>
    <property type="project" value="GO_Central"/>
</dbReference>
<dbReference type="GO" id="GO:0012505">
    <property type="term" value="C:endomembrane system"/>
    <property type="evidence" value="ECO:0007005"/>
    <property type="project" value="FlyBase"/>
</dbReference>
<dbReference type="GO" id="GO:0005789">
    <property type="term" value="C:endoplasmic reticulum membrane"/>
    <property type="evidence" value="ECO:0007669"/>
    <property type="project" value="UniProtKB-SubCell"/>
</dbReference>
<dbReference type="GO" id="GO:0005741">
    <property type="term" value="C:mitochondrial outer membrane"/>
    <property type="evidence" value="ECO:0000250"/>
    <property type="project" value="FlyBase"/>
</dbReference>
<dbReference type="GO" id="GO:0050660">
    <property type="term" value="F:flavin adenine dinucleotide binding"/>
    <property type="evidence" value="ECO:0000318"/>
    <property type="project" value="GO_Central"/>
</dbReference>
<dbReference type="GO" id="GO:0010181">
    <property type="term" value="F:FMN binding"/>
    <property type="evidence" value="ECO:0000318"/>
    <property type="project" value="GO_Central"/>
</dbReference>
<dbReference type="GO" id="GO:0050661">
    <property type="term" value="F:NADP binding"/>
    <property type="evidence" value="ECO:0007669"/>
    <property type="project" value="UniProtKB-UniRule"/>
</dbReference>
<dbReference type="GO" id="GO:0003958">
    <property type="term" value="F:NADPH-hemoprotein reductase activity"/>
    <property type="evidence" value="ECO:0000250"/>
    <property type="project" value="FlyBase"/>
</dbReference>
<dbReference type="GO" id="GO:0006723">
    <property type="term" value="P:cuticle hydrocarbon biosynthetic process"/>
    <property type="evidence" value="ECO:0000315"/>
    <property type="project" value="FlyBase"/>
</dbReference>
<dbReference type="GO" id="GO:0006809">
    <property type="term" value="P:nitric oxide biosynthetic process"/>
    <property type="evidence" value="ECO:0000318"/>
    <property type="project" value="GO_Central"/>
</dbReference>
<dbReference type="GO" id="GO:0009725">
    <property type="term" value="P:response to hormone"/>
    <property type="evidence" value="ECO:0000318"/>
    <property type="project" value="GO_Central"/>
</dbReference>
<dbReference type="CDD" id="cd06204">
    <property type="entry name" value="CYPOR"/>
    <property type="match status" value="1"/>
</dbReference>
<dbReference type="FunFam" id="1.20.990.10:FF:000001">
    <property type="entry name" value="NADPH--cytochrome P450 reductase"/>
    <property type="match status" value="1"/>
</dbReference>
<dbReference type="FunFam" id="3.40.50.360:FF:000009">
    <property type="entry name" value="NADPH--cytochrome P450 reductase"/>
    <property type="match status" value="1"/>
</dbReference>
<dbReference type="FunFam" id="3.40.50.80:FF:000001">
    <property type="entry name" value="NADPH--cytochrome P450 reductase 1"/>
    <property type="match status" value="1"/>
</dbReference>
<dbReference type="Gene3D" id="3.40.50.360">
    <property type="match status" value="1"/>
</dbReference>
<dbReference type="Gene3D" id="1.20.990.10">
    <property type="entry name" value="NADPH-cytochrome p450 Reductase, Chain A, domain 3"/>
    <property type="match status" value="1"/>
</dbReference>
<dbReference type="Gene3D" id="3.40.50.80">
    <property type="entry name" value="Nucleotide-binding domain of ferredoxin-NADP reductase (FNR) module"/>
    <property type="match status" value="1"/>
</dbReference>
<dbReference type="Gene3D" id="2.40.30.10">
    <property type="entry name" value="Translation factors"/>
    <property type="match status" value="1"/>
</dbReference>
<dbReference type="HAMAP" id="MF_03212">
    <property type="entry name" value="NCPR"/>
    <property type="match status" value="1"/>
</dbReference>
<dbReference type="InterPro" id="IPR003097">
    <property type="entry name" value="CysJ-like_FAD-binding"/>
</dbReference>
<dbReference type="InterPro" id="IPR017927">
    <property type="entry name" value="FAD-bd_FR_type"/>
</dbReference>
<dbReference type="InterPro" id="IPR001094">
    <property type="entry name" value="Flavdoxin-like"/>
</dbReference>
<dbReference type="InterPro" id="IPR008254">
    <property type="entry name" value="Flavodoxin/NO_synth"/>
</dbReference>
<dbReference type="InterPro" id="IPR001709">
    <property type="entry name" value="Flavoprot_Pyr_Nucl_cyt_Rdtase"/>
</dbReference>
<dbReference type="InterPro" id="IPR029039">
    <property type="entry name" value="Flavoprotein-like_sf"/>
</dbReference>
<dbReference type="InterPro" id="IPR039261">
    <property type="entry name" value="FNR_nucleotide-bd"/>
</dbReference>
<dbReference type="InterPro" id="IPR023173">
    <property type="entry name" value="NADPH_Cyt_P450_Rdtase_alpha"/>
</dbReference>
<dbReference type="InterPro" id="IPR001433">
    <property type="entry name" value="OxRdtase_FAD/NAD-bd"/>
</dbReference>
<dbReference type="InterPro" id="IPR023208">
    <property type="entry name" value="P450R"/>
</dbReference>
<dbReference type="InterPro" id="IPR017938">
    <property type="entry name" value="Riboflavin_synthase-like_b-brl"/>
</dbReference>
<dbReference type="PANTHER" id="PTHR19384:SF17">
    <property type="entry name" value="NADPH--CYTOCHROME P450 REDUCTASE"/>
    <property type="match status" value="1"/>
</dbReference>
<dbReference type="PANTHER" id="PTHR19384">
    <property type="entry name" value="NITRIC OXIDE SYNTHASE-RELATED"/>
    <property type="match status" value="1"/>
</dbReference>
<dbReference type="Pfam" id="PF00667">
    <property type="entry name" value="FAD_binding_1"/>
    <property type="match status" value="1"/>
</dbReference>
<dbReference type="Pfam" id="PF00258">
    <property type="entry name" value="Flavodoxin_1"/>
    <property type="match status" value="1"/>
</dbReference>
<dbReference type="Pfam" id="PF00175">
    <property type="entry name" value="NAD_binding_1"/>
    <property type="match status" value="1"/>
</dbReference>
<dbReference type="PIRSF" id="PIRSF000208">
    <property type="entry name" value="P450R"/>
    <property type="match status" value="1"/>
</dbReference>
<dbReference type="PRINTS" id="PR00369">
    <property type="entry name" value="FLAVODOXIN"/>
</dbReference>
<dbReference type="PRINTS" id="PR00371">
    <property type="entry name" value="FPNCR"/>
</dbReference>
<dbReference type="SUPFAM" id="SSF52343">
    <property type="entry name" value="Ferredoxin reductase-like, C-terminal NADP-linked domain"/>
    <property type="match status" value="1"/>
</dbReference>
<dbReference type="SUPFAM" id="SSF52218">
    <property type="entry name" value="Flavoproteins"/>
    <property type="match status" value="1"/>
</dbReference>
<dbReference type="SUPFAM" id="SSF63380">
    <property type="entry name" value="Riboflavin synthase domain-like"/>
    <property type="match status" value="1"/>
</dbReference>
<dbReference type="PROSITE" id="PS51384">
    <property type="entry name" value="FAD_FR"/>
    <property type="match status" value="1"/>
</dbReference>
<dbReference type="PROSITE" id="PS50902">
    <property type="entry name" value="FLAVODOXIN_LIKE"/>
    <property type="match status" value="1"/>
</dbReference>
<accession>Q27597</accession>
<accession>Q9VMF2</accession>
<protein>
    <recommendedName>
        <fullName evidence="1">NADPH--cytochrome P450 reductase</fullName>
        <shortName evidence="1">CPR</shortName>
        <shortName evidence="1">P450R</shortName>
        <ecNumber evidence="1">1.6.2.4</ecNumber>
    </recommendedName>
</protein>
<feature type="chain" id="PRO_0000167602" description="NADPH--cytochrome P450 reductase">
    <location>
        <begin position="1"/>
        <end position="679"/>
    </location>
</feature>
<feature type="topological domain" description="Lumenal" evidence="1">
    <location>
        <begin position="1"/>
        <end position="21"/>
    </location>
</feature>
<feature type="transmembrane region" description="Helical" evidence="1">
    <location>
        <begin position="22"/>
        <end position="42"/>
    </location>
</feature>
<feature type="topological domain" description="Cytoplasmic" evidence="1">
    <location>
        <begin position="43"/>
        <end position="679"/>
    </location>
</feature>
<feature type="domain" description="Flavodoxin-like" evidence="1">
    <location>
        <begin position="84"/>
        <end position="228"/>
    </location>
</feature>
<feature type="domain" description="FAD-binding FR-type" evidence="1">
    <location>
        <begin position="283"/>
        <end position="523"/>
    </location>
</feature>
<feature type="binding site" evidence="1">
    <location>
        <begin position="90"/>
        <end position="95"/>
    </location>
    <ligand>
        <name>FMN</name>
        <dbReference type="ChEBI" id="CHEBI:58210"/>
    </ligand>
</feature>
<feature type="binding site" evidence="1">
    <location>
        <begin position="142"/>
        <end position="145"/>
    </location>
    <ligand>
        <name>FMN</name>
        <dbReference type="ChEBI" id="CHEBI:58210"/>
    </ligand>
</feature>
<feature type="binding site" evidence="1">
    <location>
        <begin position="177"/>
        <end position="186"/>
    </location>
    <ligand>
        <name>FMN</name>
        <dbReference type="ChEBI" id="CHEBI:58210"/>
    </ligand>
</feature>
<feature type="binding site" evidence="1">
    <location>
        <position position="212"/>
    </location>
    <ligand>
        <name>FMN</name>
        <dbReference type="ChEBI" id="CHEBI:58210"/>
    </ligand>
</feature>
<feature type="binding site" evidence="1">
    <location>
        <position position="302"/>
    </location>
    <ligand>
        <name>NADP(+)</name>
        <dbReference type="ChEBI" id="CHEBI:58349"/>
    </ligand>
</feature>
<feature type="binding site" evidence="1">
    <location>
        <begin position="458"/>
        <end position="461"/>
    </location>
    <ligand>
        <name>FAD</name>
        <dbReference type="ChEBI" id="CHEBI:57692"/>
    </ligand>
</feature>
<feature type="binding site" evidence="1">
    <location>
        <begin position="476"/>
        <end position="478"/>
    </location>
    <ligand>
        <name>FAD</name>
        <dbReference type="ChEBI" id="CHEBI:57692"/>
    </ligand>
</feature>
<feature type="binding site" evidence="1">
    <location>
        <position position="482"/>
    </location>
    <ligand>
        <name>FAD</name>
        <dbReference type="ChEBI" id="CHEBI:57692"/>
    </ligand>
</feature>
<feature type="binding site" evidence="1">
    <location>
        <begin position="492"/>
        <end position="495"/>
    </location>
    <ligand>
        <name>FAD</name>
        <dbReference type="ChEBI" id="CHEBI:57692"/>
    </ligand>
</feature>
<feature type="binding site" evidence="1">
    <location>
        <position position="537"/>
    </location>
    <ligand>
        <name>NADP(+)</name>
        <dbReference type="ChEBI" id="CHEBI:58349"/>
    </ligand>
</feature>
<feature type="binding site" evidence="1">
    <location>
        <begin position="597"/>
        <end position="598"/>
    </location>
    <ligand>
        <name>NADP(+)</name>
        <dbReference type="ChEBI" id="CHEBI:58349"/>
    </ligand>
</feature>
<feature type="binding site" evidence="1">
    <location>
        <begin position="603"/>
        <end position="607"/>
    </location>
    <ligand>
        <name>NADP(+)</name>
        <dbReference type="ChEBI" id="CHEBI:58349"/>
    </ligand>
</feature>
<feature type="binding site" evidence="1">
    <location>
        <position position="640"/>
    </location>
    <ligand>
        <name>NADP(+)</name>
        <dbReference type="ChEBI" id="CHEBI:58349"/>
    </ligand>
</feature>
<feature type="binding site" evidence="1">
    <location>
        <position position="678"/>
    </location>
    <ligand>
        <name>FAD</name>
        <dbReference type="ChEBI" id="CHEBI:57692"/>
    </ligand>
</feature>
<feature type="sequence conflict" description="In Ref. 1; CAA63639." evidence="4" ref="1">
    <original>AA</original>
    <variation>VT</variation>
    <location>
        <begin position="38"/>
        <end position="39"/>
    </location>
</feature>
<feature type="sequence conflict" description="In Ref. 1; CAA63639." evidence="4" ref="1">
    <original>S</original>
    <variation>T</variation>
    <location>
        <position position="45"/>
    </location>
</feature>
<feature type="sequence conflict" description="In Ref. 1; CAA63639." evidence="4" ref="1">
    <original>I</original>
    <variation>T</variation>
    <location>
        <position position="132"/>
    </location>
</feature>
<evidence type="ECO:0000255" key="1">
    <source>
        <dbReference type="HAMAP-Rule" id="MF_03212"/>
    </source>
</evidence>
<evidence type="ECO:0000269" key="2">
    <source>
    </source>
</evidence>
<evidence type="ECO:0000269" key="3">
    <source>
    </source>
</evidence>
<evidence type="ECO:0000305" key="4"/>
<keyword id="KW-0256">Endoplasmic reticulum</keyword>
<keyword id="KW-0274">FAD</keyword>
<keyword id="KW-0285">Flavoprotein</keyword>
<keyword id="KW-0288">FMN</keyword>
<keyword id="KW-0472">Membrane</keyword>
<keyword id="KW-0521">NADP</keyword>
<keyword id="KW-0560">Oxidoreductase</keyword>
<keyword id="KW-1185">Reference proteome</keyword>
<keyword id="KW-0812">Transmembrane</keyword>
<keyword id="KW-1133">Transmembrane helix</keyword>
<name>NCPR_DROME</name>
<organism>
    <name type="scientific">Drosophila melanogaster</name>
    <name type="common">Fruit fly</name>
    <dbReference type="NCBI Taxonomy" id="7227"/>
    <lineage>
        <taxon>Eukaryota</taxon>
        <taxon>Metazoa</taxon>
        <taxon>Ecdysozoa</taxon>
        <taxon>Arthropoda</taxon>
        <taxon>Hexapoda</taxon>
        <taxon>Insecta</taxon>
        <taxon>Pterygota</taxon>
        <taxon>Neoptera</taxon>
        <taxon>Endopterygota</taxon>
        <taxon>Diptera</taxon>
        <taxon>Brachycera</taxon>
        <taxon>Muscomorpha</taxon>
        <taxon>Ephydroidea</taxon>
        <taxon>Drosophilidae</taxon>
        <taxon>Drosophila</taxon>
        <taxon>Sophophora</taxon>
    </lineage>
</organism>
<comment type="function">
    <text evidence="1 3">This enzyme is required for electron transfer from NADP to cytochrome p450 in microsomes. It can also provide electron transfer to heme oxygenase and cytochrome b5 (By similarity). May function to clear the olfactory organ (antennae) from accumulating chemicals.</text>
</comment>
<comment type="catalytic activity">
    <reaction evidence="1">
        <text>2 oxidized [cytochrome P450] + NADPH = 2 reduced [cytochrome P450] + NADP(+) + H(+)</text>
        <dbReference type="Rhea" id="RHEA:24040"/>
        <dbReference type="Rhea" id="RHEA-COMP:14627"/>
        <dbReference type="Rhea" id="RHEA-COMP:14628"/>
        <dbReference type="ChEBI" id="CHEBI:15378"/>
        <dbReference type="ChEBI" id="CHEBI:55376"/>
        <dbReference type="ChEBI" id="CHEBI:57783"/>
        <dbReference type="ChEBI" id="CHEBI:58349"/>
        <dbReference type="ChEBI" id="CHEBI:60344"/>
        <dbReference type="EC" id="1.6.2.4"/>
    </reaction>
</comment>
<comment type="cofactor">
    <cofactor evidence="1">
        <name>FAD</name>
        <dbReference type="ChEBI" id="CHEBI:57692"/>
    </cofactor>
    <text evidence="1">Binds 1 FAD per monomer.</text>
</comment>
<comment type="cofactor">
    <cofactor evidence="1">
        <name>FMN</name>
        <dbReference type="ChEBI" id="CHEBI:58210"/>
    </cofactor>
    <text evidence="1">Binds 1 FMN per monomer.</text>
</comment>
<comment type="subunit">
    <text evidence="2">Interacts with sturkopf.</text>
</comment>
<comment type="subcellular location">
    <subcellularLocation>
        <location evidence="1">Endoplasmic reticulum membrane</location>
        <topology evidence="1">Single-pass membrane protein</topology>
        <orientation evidence="1">Cytoplasmic side</orientation>
    </subcellularLocation>
</comment>
<comment type="tissue specificity">
    <text evidence="3">High in antennae.</text>
</comment>
<comment type="developmental stage">
    <text>Embryos and adults.</text>
</comment>
<comment type="similarity">
    <text evidence="1">Belongs to the NADPH--cytochrome P450 reductase family.</text>
</comment>
<comment type="similarity">
    <text evidence="1">In the N-terminal section; belongs to the flavodoxin family.</text>
</comment>
<comment type="similarity">
    <text evidence="1">In the C-terminal section; belongs to the flavoprotein pyridine nucleotide cytochrome reductase family.</text>
</comment>
<reference key="1">
    <citation type="journal article" date="1997" name="Gene">
        <title>Drosophila melanogaster NADPH-cytochrome P450 oxidoreductase: pronounced expression in antennae may be related to odorant clearance.</title>
        <authorList>
            <person name="Hovemann B.T."/>
            <person name="Sehlmeyer F."/>
            <person name="Malz J."/>
        </authorList>
    </citation>
    <scope>NUCLEOTIDE SEQUENCE [MRNA]</scope>
    <scope>FUNCTION</scope>
    <scope>TISSUE SPECIFICITY</scope>
    <source>
        <strain>Canton-S</strain>
        <tissue>Antenna</tissue>
    </source>
</reference>
<reference key="2">
    <citation type="journal article" date="2000" name="Science">
        <title>The genome sequence of Drosophila melanogaster.</title>
        <authorList>
            <person name="Adams M.D."/>
            <person name="Celniker S.E."/>
            <person name="Holt R.A."/>
            <person name="Evans C.A."/>
            <person name="Gocayne J.D."/>
            <person name="Amanatides P.G."/>
            <person name="Scherer S.E."/>
            <person name="Li P.W."/>
            <person name="Hoskins R.A."/>
            <person name="Galle R.F."/>
            <person name="George R.A."/>
            <person name="Lewis S.E."/>
            <person name="Richards S."/>
            <person name="Ashburner M."/>
            <person name="Henderson S.N."/>
            <person name="Sutton G.G."/>
            <person name="Wortman J.R."/>
            <person name="Yandell M.D."/>
            <person name="Zhang Q."/>
            <person name="Chen L.X."/>
            <person name="Brandon R.C."/>
            <person name="Rogers Y.-H.C."/>
            <person name="Blazej R.G."/>
            <person name="Champe M."/>
            <person name="Pfeiffer B.D."/>
            <person name="Wan K.H."/>
            <person name="Doyle C."/>
            <person name="Baxter E.G."/>
            <person name="Helt G."/>
            <person name="Nelson C.R."/>
            <person name="Miklos G.L.G."/>
            <person name="Abril J.F."/>
            <person name="Agbayani A."/>
            <person name="An H.-J."/>
            <person name="Andrews-Pfannkoch C."/>
            <person name="Baldwin D."/>
            <person name="Ballew R.M."/>
            <person name="Basu A."/>
            <person name="Baxendale J."/>
            <person name="Bayraktaroglu L."/>
            <person name="Beasley E.M."/>
            <person name="Beeson K.Y."/>
            <person name="Benos P.V."/>
            <person name="Berman B.P."/>
            <person name="Bhandari D."/>
            <person name="Bolshakov S."/>
            <person name="Borkova D."/>
            <person name="Botchan M.R."/>
            <person name="Bouck J."/>
            <person name="Brokstein P."/>
            <person name="Brottier P."/>
            <person name="Burtis K.C."/>
            <person name="Busam D.A."/>
            <person name="Butler H."/>
            <person name="Cadieu E."/>
            <person name="Center A."/>
            <person name="Chandra I."/>
            <person name="Cherry J.M."/>
            <person name="Cawley S."/>
            <person name="Dahlke C."/>
            <person name="Davenport L.B."/>
            <person name="Davies P."/>
            <person name="de Pablos B."/>
            <person name="Delcher A."/>
            <person name="Deng Z."/>
            <person name="Mays A.D."/>
            <person name="Dew I."/>
            <person name="Dietz S.M."/>
            <person name="Dodson K."/>
            <person name="Doup L.E."/>
            <person name="Downes M."/>
            <person name="Dugan-Rocha S."/>
            <person name="Dunkov B.C."/>
            <person name="Dunn P."/>
            <person name="Durbin K.J."/>
            <person name="Evangelista C.C."/>
            <person name="Ferraz C."/>
            <person name="Ferriera S."/>
            <person name="Fleischmann W."/>
            <person name="Fosler C."/>
            <person name="Gabrielian A.E."/>
            <person name="Garg N.S."/>
            <person name="Gelbart W.M."/>
            <person name="Glasser K."/>
            <person name="Glodek A."/>
            <person name="Gong F."/>
            <person name="Gorrell J.H."/>
            <person name="Gu Z."/>
            <person name="Guan P."/>
            <person name="Harris M."/>
            <person name="Harris N.L."/>
            <person name="Harvey D.A."/>
            <person name="Heiman T.J."/>
            <person name="Hernandez J.R."/>
            <person name="Houck J."/>
            <person name="Hostin D."/>
            <person name="Houston K.A."/>
            <person name="Howland T.J."/>
            <person name="Wei M.-H."/>
            <person name="Ibegwam C."/>
            <person name="Jalali M."/>
            <person name="Kalush F."/>
            <person name="Karpen G.H."/>
            <person name="Ke Z."/>
            <person name="Kennison J.A."/>
            <person name="Ketchum K.A."/>
            <person name="Kimmel B.E."/>
            <person name="Kodira C.D."/>
            <person name="Kraft C.L."/>
            <person name="Kravitz S."/>
            <person name="Kulp D."/>
            <person name="Lai Z."/>
            <person name="Lasko P."/>
            <person name="Lei Y."/>
            <person name="Levitsky A.A."/>
            <person name="Li J.H."/>
            <person name="Li Z."/>
            <person name="Liang Y."/>
            <person name="Lin X."/>
            <person name="Liu X."/>
            <person name="Mattei B."/>
            <person name="McIntosh T.C."/>
            <person name="McLeod M.P."/>
            <person name="McPherson D."/>
            <person name="Merkulov G."/>
            <person name="Milshina N.V."/>
            <person name="Mobarry C."/>
            <person name="Morris J."/>
            <person name="Moshrefi A."/>
            <person name="Mount S.M."/>
            <person name="Moy M."/>
            <person name="Murphy B."/>
            <person name="Murphy L."/>
            <person name="Muzny D.M."/>
            <person name="Nelson D.L."/>
            <person name="Nelson D.R."/>
            <person name="Nelson K.A."/>
            <person name="Nixon K."/>
            <person name="Nusskern D.R."/>
            <person name="Pacleb J.M."/>
            <person name="Palazzolo M."/>
            <person name="Pittman G.S."/>
            <person name="Pan S."/>
            <person name="Pollard J."/>
            <person name="Puri V."/>
            <person name="Reese M.G."/>
            <person name="Reinert K."/>
            <person name="Remington K."/>
            <person name="Saunders R.D.C."/>
            <person name="Scheeler F."/>
            <person name="Shen H."/>
            <person name="Shue B.C."/>
            <person name="Siden-Kiamos I."/>
            <person name="Simpson M."/>
            <person name="Skupski M.P."/>
            <person name="Smith T.J."/>
            <person name="Spier E."/>
            <person name="Spradling A.C."/>
            <person name="Stapleton M."/>
            <person name="Strong R."/>
            <person name="Sun E."/>
            <person name="Svirskas R."/>
            <person name="Tector C."/>
            <person name="Turner R."/>
            <person name="Venter E."/>
            <person name="Wang A.H."/>
            <person name="Wang X."/>
            <person name="Wang Z.-Y."/>
            <person name="Wassarman D.A."/>
            <person name="Weinstock G.M."/>
            <person name="Weissenbach J."/>
            <person name="Williams S.M."/>
            <person name="Woodage T."/>
            <person name="Worley K.C."/>
            <person name="Wu D."/>
            <person name="Yang S."/>
            <person name="Yao Q.A."/>
            <person name="Ye J."/>
            <person name="Yeh R.-F."/>
            <person name="Zaveri J.S."/>
            <person name="Zhan M."/>
            <person name="Zhang G."/>
            <person name="Zhao Q."/>
            <person name="Zheng L."/>
            <person name="Zheng X.H."/>
            <person name="Zhong F.N."/>
            <person name="Zhong W."/>
            <person name="Zhou X."/>
            <person name="Zhu S.C."/>
            <person name="Zhu X."/>
            <person name="Smith H.O."/>
            <person name="Gibbs R.A."/>
            <person name="Myers E.W."/>
            <person name="Rubin G.M."/>
            <person name="Venter J.C."/>
        </authorList>
    </citation>
    <scope>NUCLEOTIDE SEQUENCE [LARGE SCALE GENOMIC DNA]</scope>
    <source>
        <strain>Berkeley</strain>
    </source>
</reference>
<reference key="3">
    <citation type="journal article" date="2002" name="Genome Biol.">
        <title>Annotation of the Drosophila melanogaster euchromatic genome: a systematic review.</title>
        <authorList>
            <person name="Misra S."/>
            <person name="Crosby M.A."/>
            <person name="Mungall C.J."/>
            <person name="Matthews B.B."/>
            <person name="Campbell K.S."/>
            <person name="Hradecky P."/>
            <person name="Huang Y."/>
            <person name="Kaminker J.S."/>
            <person name="Millburn G.H."/>
            <person name="Prochnik S.E."/>
            <person name="Smith C.D."/>
            <person name="Tupy J.L."/>
            <person name="Whitfield E.J."/>
            <person name="Bayraktaroglu L."/>
            <person name="Berman B.P."/>
            <person name="Bettencourt B.R."/>
            <person name="Celniker S.E."/>
            <person name="de Grey A.D.N.J."/>
            <person name="Drysdale R.A."/>
            <person name="Harris N.L."/>
            <person name="Richter J."/>
            <person name="Russo S."/>
            <person name="Schroeder A.J."/>
            <person name="Shu S.Q."/>
            <person name="Stapleton M."/>
            <person name="Yamada C."/>
            <person name="Ashburner M."/>
            <person name="Gelbart W.M."/>
            <person name="Rubin G.M."/>
            <person name="Lewis S.E."/>
        </authorList>
    </citation>
    <scope>GENOME REANNOTATION</scope>
    <source>
        <strain>Berkeley</strain>
    </source>
</reference>
<reference key="4">
    <citation type="journal article" date="2002" name="Genome Biol.">
        <title>A Drosophila full-length cDNA resource.</title>
        <authorList>
            <person name="Stapleton M."/>
            <person name="Carlson J.W."/>
            <person name="Brokstein P."/>
            <person name="Yu C."/>
            <person name="Champe M."/>
            <person name="George R.A."/>
            <person name="Guarin H."/>
            <person name="Kronmiller B."/>
            <person name="Pacleb J.M."/>
            <person name="Park S."/>
            <person name="Wan K.H."/>
            <person name="Rubin G.M."/>
            <person name="Celniker S.E."/>
        </authorList>
    </citation>
    <scope>NUCLEOTIDE SEQUENCE [LARGE SCALE MRNA]</scope>
    <source>
        <strain>Berkeley</strain>
        <tissue>Embryo</tissue>
    </source>
</reference>
<reference key="5">
    <citation type="journal article" date="2019" name="Cell Rep.">
        <title>Control of Drosophila Growth and Survival by the Lipid Droplet-Associated Protein CG9186/Sturkopf.</title>
        <authorList>
            <person name="Werthebach M."/>
            <person name="Stewart F.A."/>
            <person name="Gahlen A."/>
            <person name="Mettler-Altmann T."/>
            <person name="Akhtar I."/>
            <person name="Maas-Enriquez K."/>
            <person name="Droste A."/>
            <person name="Eichmann T.O."/>
            <person name="Poschmann G."/>
            <person name="Stuehler K."/>
            <person name="Beller M."/>
        </authorList>
    </citation>
    <scope>INTERACTION WITH STURKOPF</scope>
</reference>
<gene>
    <name type="primary">Cpr</name>
    <name type="ORF">CG11567</name>
</gene>